<reference key="1">
    <citation type="journal article" date="2008" name="J. Bacteriol.">
        <title>Insights into the environmental resistance gene pool from the genome sequence of the multidrug-resistant environmental isolate Escherichia coli SMS-3-5.</title>
        <authorList>
            <person name="Fricke W.F."/>
            <person name="Wright M.S."/>
            <person name="Lindell A.H."/>
            <person name="Harkins D.M."/>
            <person name="Baker-Austin C."/>
            <person name="Ravel J."/>
            <person name="Stepanauskas R."/>
        </authorList>
    </citation>
    <scope>NUCLEOTIDE SEQUENCE [LARGE SCALE GENOMIC DNA]</scope>
    <source>
        <strain>SMS-3-5 / SECEC</strain>
    </source>
</reference>
<sequence>MSLTRLLIRDFRNIETADLALSPGFNFLVGANGSGKTSVLEAIYTLGHGRAFRSLQIGRVIRHEQEAFVLHGRLQGEERETAIGLTKDKQGDSKVRIDGTDGHKVAELAHLMPMQLITPEGFTLLNGGPKYRRAFLDWGCFHNEPGFFTAWSNLKRLLKQRNAALRQVTRYEQLRPWDKELIPLAEQISTWRAEYSAGIAADMADTCKQFLPEFSLTFSFQRGWEKETEYAEVLERNFERDRQLTYTAHGPHKADLRIRADGAPVEDTLSRGQLKLLMCALRLAQGEFLTRESGRRCLYLIDDFASELDDERRGLLASRLKATQSQVFVSAISAEHVIDMSDENSKMFTVEKGKITD</sequence>
<comment type="function">
    <text evidence="1">The RecF protein is involved in DNA metabolism; it is required for DNA replication and normal SOS inducibility. RecF binds preferentially to single-stranded, linear DNA. It also seems to bind ATP.</text>
</comment>
<comment type="subcellular location">
    <subcellularLocation>
        <location evidence="1">Cytoplasm</location>
    </subcellularLocation>
</comment>
<comment type="similarity">
    <text evidence="1">Belongs to the RecF family.</text>
</comment>
<protein>
    <recommendedName>
        <fullName evidence="1">DNA replication and repair protein RecF</fullName>
    </recommendedName>
</protein>
<organism>
    <name type="scientific">Escherichia coli (strain SMS-3-5 / SECEC)</name>
    <dbReference type="NCBI Taxonomy" id="439855"/>
    <lineage>
        <taxon>Bacteria</taxon>
        <taxon>Pseudomonadati</taxon>
        <taxon>Pseudomonadota</taxon>
        <taxon>Gammaproteobacteria</taxon>
        <taxon>Enterobacterales</taxon>
        <taxon>Enterobacteriaceae</taxon>
        <taxon>Escherichia</taxon>
    </lineage>
</organism>
<name>RECF_ECOSM</name>
<feature type="chain" id="PRO_1000121115" description="DNA replication and repair protein RecF">
    <location>
        <begin position="1"/>
        <end position="357"/>
    </location>
</feature>
<feature type="binding site" evidence="1">
    <location>
        <begin position="30"/>
        <end position="37"/>
    </location>
    <ligand>
        <name>ATP</name>
        <dbReference type="ChEBI" id="CHEBI:30616"/>
    </ligand>
</feature>
<keyword id="KW-0067">ATP-binding</keyword>
<keyword id="KW-0963">Cytoplasm</keyword>
<keyword id="KW-0227">DNA damage</keyword>
<keyword id="KW-0234">DNA repair</keyword>
<keyword id="KW-0235">DNA replication</keyword>
<keyword id="KW-0238">DNA-binding</keyword>
<keyword id="KW-0547">Nucleotide-binding</keyword>
<keyword id="KW-0742">SOS response</keyword>
<gene>
    <name evidence="1" type="primary">recF</name>
    <name type="ordered locus">EcSMS35_4065</name>
</gene>
<proteinExistence type="inferred from homology"/>
<dbReference type="EMBL" id="CP000970">
    <property type="protein sequence ID" value="ACB20091.1"/>
    <property type="molecule type" value="Genomic_DNA"/>
</dbReference>
<dbReference type="RefSeq" id="WP_000060112.1">
    <property type="nucleotide sequence ID" value="NC_010498.1"/>
</dbReference>
<dbReference type="SMR" id="B1LL25"/>
<dbReference type="GeneID" id="93778441"/>
<dbReference type="KEGG" id="ecm:EcSMS35_4065"/>
<dbReference type="HOGENOM" id="CLU_040267_0_0_6"/>
<dbReference type="Proteomes" id="UP000007011">
    <property type="component" value="Chromosome"/>
</dbReference>
<dbReference type="GO" id="GO:0005737">
    <property type="term" value="C:cytoplasm"/>
    <property type="evidence" value="ECO:0007669"/>
    <property type="project" value="UniProtKB-SubCell"/>
</dbReference>
<dbReference type="GO" id="GO:0005524">
    <property type="term" value="F:ATP binding"/>
    <property type="evidence" value="ECO:0007669"/>
    <property type="project" value="UniProtKB-UniRule"/>
</dbReference>
<dbReference type="GO" id="GO:0003697">
    <property type="term" value="F:single-stranded DNA binding"/>
    <property type="evidence" value="ECO:0007669"/>
    <property type="project" value="UniProtKB-UniRule"/>
</dbReference>
<dbReference type="GO" id="GO:0006260">
    <property type="term" value="P:DNA replication"/>
    <property type="evidence" value="ECO:0007669"/>
    <property type="project" value="UniProtKB-UniRule"/>
</dbReference>
<dbReference type="GO" id="GO:0000731">
    <property type="term" value="P:DNA synthesis involved in DNA repair"/>
    <property type="evidence" value="ECO:0007669"/>
    <property type="project" value="TreeGrafter"/>
</dbReference>
<dbReference type="GO" id="GO:0006302">
    <property type="term" value="P:double-strand break repair"/>
    <property type="evidence" value="ECO:0007669"/>
    <property type="project" value="TreeGrafter"/>
</dbReference>
<dbReference type="GO" id="GO:0009432">
    <property type="term" value="P:SOS response"/>
    <property type="evidence" value="ECO:0007669"/>
    <property type="project" value="UniProtKB-UniRule"/>
</dbReference>
<dbReference type="FunFam" id="1.20.1050.90:FF:000001">
    <property type="entry name" value="DNA replication and repair protein RecF"/>
    <property type="match status" value="1"/>
</dbReference>
<dbReference type="Gene3D" id="3.40.50.300">
    <property type="entry name" value="P-loop containing nucleotide triphosphate hydrolases"/>
    <property type="match status" value="1"/>
</dbReference>
<dbReference type="Gene3D" id="1.20.1050.90">
    <property type="entry name" value="RecF/RecN/SMC, N-terminal domain"/>
    <property type="match status" value="1"/>
</dbReference>
<dbReference type="HAMAP" id="MF_00365">
    <property type="entry name" value="RecF"/>
    <property type="match status" value="1"/>
</dbReference>
<dbReference type="InterPro" id="IPR001238">
    <property type="entry name" value="DNA-binding_RecF"/>
</dbReference>
<dbReference type="InterPro" id="IPR018078">
    <property type="entry name" value="DNA-binding_RecF_CS"/>
</dbReference>
<dbReference type="InterPro" id="IPR027417">
    <property type="entry name" value="P-loop_NTPase"/>
</dbReference>
<dbReference type="InterPro" id="IPR003395">
    <property type="entry name" value="RecF/RecN/SMC_N"/>
</dbReference>
<dbReference type="InterPro" id="IPR042174">
    <property type="entry name" value="RecF_2"/>
</dbReference>
<dbReference type="NCBIfam" id="TIGR00611">
    <property type="entry name" value="recf"/>
    <property type="match status" value="1"/>
</dbReference>
<dbReference type="PANTHER" id="PTHR32182">
    <property type="entry name" value="DNA REPLICATION AND REPAIR PROTEIN RECF"/>
    <property type="match status" value="1"/>
</dbReference>
<dbReference type="PANTHER" id="PTHR32182:SF0">
    <property type="entry name" value="DNA REPLICATION AND REPAIR PROTEIN RECF"/>
    <property type="match status" value="1"/>
</dbReference>
<dbReference type="Pfam" id="PF02463">
    <property type="entry name" value="SMC_N"/>
    <property type="match status" value="1"/>
</dbReference>
<dbReference type="SUPFAM" id="SSF52540">
    <property type="entry name" value="P-loop containing nucleoside triphosphate hydrolases"/>
    <property type="match status" value="1"/>
</dbReference>
<dbReference type="PROSITE" id="PS00617">
    <property type="entry name" value="RECF_1"/>
    <property type="match status" value="1"/>
</dbReference>
<dbReference type="PROSITE" id="PS00618">
    <property type="entry name" value="RECF_2"/>
    <property type="match status" value="1"/>
</dbReference>
<evidence type="ECO:0000255" key="1">
    <source>
        <dbReference type="HAMAP-Rule" id="MF_00365"/>
    </source>
</evidence>
<accession>B1LL25</accession>